<comment type="function">
    <text>Functions in trans to modulate the level of transcription of the flagellin genes and several genes encoding chemotaxis functions. It is itself temporally controlled.</text>
</comment>
<comment type="caution">
    <text evidence="2">Was originally proposed to code for two separate adjacent ORFs, flaE and flaY.</text>
</comment>
<comment type="sequence caution" evidence="1">
    <conflict type="frameshift" ref="1"/>
</comment>
<proteinExistence type="predicted"/>
<reference key="1">
    <citation type="journal article" date="1989" name="J. Mol. Biol.">
        <title>Temporal regulation and overlap organization of two Caulobacter flagellar genes.</title>
        <authorList>
            <person name="Kaplan J.B."/>
            <person name="Dingwall A."/>
            <person name="Bryan R."/>
            <person name="Champer R."/>
            <person name="Shapiro L."/>
        </authorList>
    </citation>
    <scope>PRELIMINARY NUCLEOTIDE SEQUENCE [GENOMIC DNA]</scope>
    <source>
        <strain>ATCC 19089 / CIP 103742 / CB 15</strain>
    </source>
</reference>
<reference key="2">
    <citation type="journal article" date="2001" name="Proc. Natl. Acad. Sci. U.S.A.">
        <title>Complete genome sequence of Caulobacter crescentus.</title>
        <authorList>
            <person name="Nierman W.C."/>
            <person name="Feldblyum T.V."/>
            <person name="Laub M.T."/>
            <person name="Paulsen I.T."/>
            <person name="Nelson K.E."/>
            <person name="Eisen J.A."/>
            <person name="Heidelberg J.F."/>
            <person name="Alley M.R.K."/>
            <person name="Ohta N."/>
            <person name="Maddock J.R."/>
            <person name="Potocka I."/>
            <person name="Nelson W.C."/>
            <person name="Newton A."/>
            <person name="Stephens C."/>
            <person name="Phadke N.D."/>
            <person name="Ely B."/>
            <person name="DeBoy R.T."/>
            <person name="Dodson R.J."/>
            <person name="Durkin A.S."/>
            <person name="Gwinn M.L."/>
            <person name="Haft D.H."/>
            <person name="Kolonay J.F."/>
            <person name="Smit J."/>
            <person name="Craven M.B."/>
            <person name="Khouri H.M."/>
            <person name="Shetty J."/>
            <person name="Berry K.J."/>
            <person name="Utterback T.R."/>
            <person name="Tran K."/>
            <person name="Wolf A.M."/>
            <person name="Vamathevan J.J."/>
            <person name="Ermolaeva M.D."/>
            <person name="White O."/>
            <person name="Salzberg S.L."/>
            <person name="Venter J.C."/>
            <person name="Shapiro L."/>
            <person name="Fraser C.M."/>
        </authorList>
    </citation>
    <scope>NUCLEOTIDE SEQUENCE [LARGE SCALE GENOMIC DNA]</scope>
    <source>
        <strain>ATCC 19089 / CIP 103742 / CB 15</strain>
    </source>
</reference>
<keyword id="KW-1005">Bacterial flagellum biogenesis</keyword>
<keyword id="KW-1185">Reference proteome</keyword>
<keyword id="KW-0804">Transcription</keyword>
<keyword id="KW-0805">Transcription regulation</keyword>
<protein>
    <recommendedName>
        <fullName>Regulatory protein FlaEY</fullName>
    </recommendedName>
</protein>
<evidence type="ECO:0000305" key="1"/>
<evidence type="ECO:0000305" key="2">
    <source>
    </source>
</evidence>
<feature type="chain" id="PRO_0000180981" description="Regulatory protein FlaEY">
    <location>
        <begin position="1"/>
        <end position="954"/>
    </location>
</feature>
<accession>P15345</accession>
<accession>P15346</accession>
<name>FLAEY_CAUVC</name>
<sequence>MITFDSSALLSYYQARTGLTGAGASGVSASPSRSKAVVPNAPWLSNTSPPASDLVRTALAGRKFIDEGANTSSLKGVSADYKKLFATYQALNTLSALATRAGEKGVTDGEVSRLQTALSKGLGEISGYVQNLSLDQMRLTTGAVMTSDKGTVGVPKATYSYTTDTLYTGQFDDEIPRFKGNVSFDISVKSFGVTSTVTMDLSEMGATPRTMSNVVSYMNGKMKAAGFNTDFSVQRTVGQERTVQVNGKPVKLPATGDDFALRVNGDSVEQLTFSAPTTAPAVYVTTRAGDPDPDKKAETDDGVFETTLTKYSAAGTAGGPGAGAPGGKVFSETLQGTISSVRKSVTGADGSVYMLADVSTAVDGKTDINGQPIKGESDVALLKYDSAGHLLYARSLGATDNASGLSLAVASDGSVAVAGSVSGRLQGAVNGPINNSDSSSTTDSFVTRYDAKGDEQWTVRRGGLQEDEATALAFGSNGVLYVGGRSKSDLPGSVGTDPSGGWDAYLSAFATDGNGQPKALFTQKFGTAENDSVSDIVVNGSQVIVGSKENGQAMLRSFEVTPSVVTENVTKLNQYGAYESVPVTYTKTATLTAGATRDLGSLKGGEIAGLKIDGGQLYVGGYTANNLMSIGGATTAPSGGMDGFVGRMSLDISDTTGDTLTYYGGTGDDTVTGFAVSNGTAWLVGAAGKNLDGEETVGTKDGYVAQVNVGTGAVDWSQRVTGKDGYATPTSVAVSSSGASALDAFGLPGGTMDFSQSNRIVSATAARAGDTFQIRTRERGALTTVTIDANDTLETLADKIKRASGFRAKVETATNGNSRVLKISPASNNATIEIMPGKGGTDVLRSLGIAGGVVRATKTEDGKTVSADGSGPVYGLQLPPELDLTTEAGRKNANMVITRAMSQVRTAYREIADTALGIKNDGTTGSGKTGGTVPAYLKNQVANYQAALNRLTGG</sequence>
<dbReference type="EMBL" id="AE005673">
    <property type="protein sequence ID" value="AAK23445.1"/>
    <property type="molecule type" value="Genomic_DNA"/>
</dbReference>
<dbReference type="PIR" id="A87431">
    <property type="entry name" value="A87431"/>
</dbReference>
<dbReference type="PIR" id="S02164">
    <property type="entry name" value="S02164"/>
</dbReference>
<dbReference type="PIR" id="S02165">
    <property type="entry name" value="S02165"/>
</dbReference>
<dbReference type="RefSeq" id="NP_420277.1">
    <property type="nucleotide sequence ID" value="NC_002696.2"/>
</dbReference>
<dbReference type="RefSeq" id="WP_010919340.1">
    <property type="nucleotide sequence ID" value="NC_002696.2"/>
</dbReference>
<dbReference type="SMR" id="P15345"/>
<dbReference type="STRING" id="190650.CC_1465"/>
<dbReference type="EnsemblBacteria" id="AAK23445">
    <property type="protein sequence ID" value="AAK23445"/>
    <property type="gene ID" value="CC_1465"/>
</dbReference>
<dbReference type="KEGG" id="ccr:CC_1465"/>
<dbReference type="PATRIC" id="fig|190650.5.peg.1491"/>
<dbReference type="eggNOG" id="COG1520">
    <property type="taxonomic scope" value="Bacteria"/>
</dbReference>
<dbReference type="HOGENOM" id="CLU_308754_0_0_5"/>
<dbReference type="BioCyc" id="CAULO:CC1465-MONOMER"/>
<dbReference type="Proteomes" id="UP000001816">
    <property type="component" value="Chromosome"/>
</dbReference>
<dbReference type="GO" id="GO:0044781">
    <property type="term" value="P:bacterial-type flagellum organization"/>
    <property type="evidence" value="ECO:0007669"/>
    <property type="project" value="UniProtKB-KW"/>
</dbReference>
<dbReference type="InterPro" id="IPR052918">
    <property type="entry name" value="Motility_Chemotaxis_Reg"/>
</dbReference>
<dbReference type="InterPro" id="IPR011047">
    <property type="entry name" value="Quinoprotein_ADH-like_sf"/>
</dbReference>
<dbReference type="PANTHER" id="PTHR35580">
    <property type="entry name" value="CELL SURFACE GLYCOPROTEIN (S-LAYER PROTEIN)-LIKE PROTEIN"/>
    <property type="match status" value="1"/>
</dbReference>
<dbReference type="PANTHER" id="PTHR35580:SF1">
    <property type="entry name" value="PHYTASE-LIKE DOMAIN-CONTAINING PROTEIN"/>
    <property type="match status" value="1"/>
</dbReference>
<dbReference type="SUPFAM" id="SSF50998">
    <property type="entry name" value="Quinoprotein alcohol dehydrogenase-like"/>
    <property type="match status" value="1"/>
</dbReference>
<gene>
    <name type="primary">flaEY</name>
    <name type="synonym">flaE/flaY</name>
    <name type="ordered locus">CC_1465</name>
</gene>
<organism>
    <name type="scientific">Caulobacter vibrioides (strain ATCC 19089 / CIP 103742 / CB 15)</name>
    <name type="common">Caulobacter crescentus</name>
    <dbReference type="NCBI Taxonomy" id="190650"/>
    <lineage>
        <taxon>Bacteria</taxon>
        <taxon>Pseudomonadati</taxon>
        <taxon>Pseudomonadota</taxon>
        <taxon>Alphaproteobacteria</taxon>
        <taxon>Caulobacterales</taxon>
        <taxon>Caulobacteraceae</taxon>
        <taxon>Caulobacter</taxon>
    </lineage>
</organism>